<evidence type="ECO:0000255" key="1">
    <source>
        <dbReference type="HAMAP-Rule" id="MF_00121"/>
    </source>
</evidence>
<comment type="function">
    <text evidence="1">Allows the formation of correctly charged Asn-tRNA(Asn) or Gln-tRNA(Gln) through the transamidation of misacylated Asp-tRNA(Asn) or Glu-tRNA(Gln) in organisms which lack either or both of asparaginyl-tRNA or glutaminyl-tRNA synthetases. The reaction takes place in the presence of glutamine and ATP through an activated phospho-Asp-tRNA(Asn) or phospho-Glu-tRNA(Gln).</text>
</comment>
<comment type="catalytic activity">
    <reaction evidence="1">
        <text>L-glutamyl-tRNA(Gln) + L-glutamine + ATP + H2O = L-glutaminyl-tRNA(Gln) + L-glutamate + ADP + phosphate + H(+)</text>
        <dbReference type="Rhea" id="RHEA:17521"/>
        <dbReference type="Rhea" id="RHEA-COMP:9681"/>
        <dbReference type="Rhea" id="RHEA-COMP:9684"/>
        <dbReference type="ChEBI" id="CHEBI:15377"/>
        <dbReference type="ChEBI" id="CHEBI:15378"/>
        <dbReference type="ChEBI" id="CHEBI:29985"/>
        <dbReference type="ChEBI" id="CHEBI:30616"/>
        <dbReference type="ChEBI" id="CHEBI:43474"/>
        <dbReference type="ChEBI" id="CHEBI:58359"/>
        <dbReference type="ChEBI" id="CHEBI:78520"/>
        <dbReference type="ChEBI" id="CHEBI:78521"/>
        <dbReference type="ChEBI" id="CHEBI:456216"/>
    </reaction>
</comment>
<comment type="catalytic activity">
    <reaction evidence="1">
        <text>L-aspartyl-tRNA(Asn) + L-glutamine + ATP + H2O = L-asparaginyl-tRNA(Asn) + L-glutamate + ADP + phosphate + 2 H(+)</text>
        <dbReference type="Rhea" id="RHEA:14513"/>
        <dbReference type="Rhea" id="RHEA-COMP:9674"/>
        <dbReference type="Rhea" id="RHEA-COMP:9677"/>
        <dbReference type="ChEBI" id="CHEBI:15377"/>
        <dbReference type="ChEBI" id="CHEBI:15378"/>
        <dbReference type="ChEBI" id="CHEBI:29985"/>
        <dbReference type="ChEBI" id="CHEBI:30616"/>
        <dbReference type="ChEBI" id="CHEBI:43474"/>
        <dbReference type="ChEBI" id="CHEBI:58359"/>
        <dbReference type="ChEBI" id="CHEBI:78515"/>
        <dbReference type="ChEBI" id="CHEBI:78516"/>
        <dbReference type="ChEBI" id="CHEBI:456216"/>
    </reaction>
</comment>
<comment type="subunit">
    <text evidence="1">Heterotrimer of A, B and C subunits.</text>
</comment>
<comment type="similarity">
    <text evidence="1">Belongs to the GatB/GatE family. GatB subfamily.</text>
</comment>
<protein>
    <recommendedName>
        <fullName evidence="1">Aspartyl/glutamyl-tRNA(Asn/Gln) amidotransferase subunit B</fullName>
        <shortName evidence="1">Asp/Glu-ADT subunit B</shortName>
        <ecNumber evidence="1">6.3.5.-</ecNumber>
    </recommendedName>
</protein>
<organism>
    <name type="scientific">Limosilactobacillus fermentum (strain NBRC 3956 / LMG 18251)</name>
    <name type="common">Lactobacillus fermentum</name>
    <dbReference type="NCBI Taxonomy" id="334390"/>
    <lineage>
        <taxon>Bacteria</taxon>
        <taxon>Bacillati</taxon>
        <taxon>Bacillota</taxon>
        <taxon>Bacilli</taxon>
        <taxon>Lactobacillales</taxon>
        <taxon>Lactobacillaceae</taxon>
        <taxon>Limosilactobacillus</taxon>
    </lineage>
</organism>
<keyword id="KW-0067">ATP-binding</keyword>
<keyword id="KW-0436">Ligase</keyword>
<keyword id="KW-0547">Nucleotide-binding</keyword>
<keyword id="KW-0648">Protein biosynthesis</keyword>
<keyword id="KW-1185">Reference proteome</keyword>
<feature type="chain" id="PRO_1000095217" description="Aspartyl/glutamyl-tRNA(Asn/Gln) amidotransferase subunit B">
    <location>
        <begin position="1"/>
        <end position="474"/>
    </location>
</feature>
<name>GATB_LIMF3</name>
<accession>B2GDS5</accession>
<gene>
    <name evidence="1" type="primary">gatB</name>
    <name type="ordered locus">LAF_1471</name>
</gene>
<sequence>MNFETTIGLEVHVELKTNSKIFSPSPVNFGAAPNANTNVIDWGYPGVLPSINKGVVRDGIMAALALHAEVTKKMHFDRKNYFYPDNPKAYQITQSETPIAHDGWVEIEVDGKKKKIGIKEMHIEEDAGKNTHTGSYSYVDLNRQGTPLIEIVSKADIASPEEAVAYLEALRQRIQFTGISDVKMEEGSMRVDTNISVRPYGSDQYGTKTEMKNINSFNFVKNALNFEADRHQKVLMAGGEIVQETRRYDEATKGTVAMRTKEGSDDYRYFPEPDLPPLEVDDAWIEEIRSQMPEMPGERRRRYVNDLGLTDYDAMVLTQTKEMADFFEEAVKDGGDAKKVANYLMNDVNSYLNNQHVDLDDTKLTPANLAGMIKLIDDGTISSKMAKKVFQGILDGQEPAAFAKANGLVQLSDPAELQPIIDAILDDNEQSIEDFKNGKDRAFGFLIGQIMKKTQGKANPKVVNQLLGKSLNER</sequence>
<proteinExistence type="inferred from homology"/>
<reference key="1">
    <citation type="journal article" date="2008" name="DNA Res.">
        <title>Comparative genome analysis of Lactobacillus reuteri and Lactobacillus fermentum reveal a genomic island for reuterin and cobalamin production.</title>
        <authorList>
            <person name="Morita H."/>
            <person name="Toh H."/>
            <person name="Fukuda S."/>
            <person name="Horikawa H."/>
            <person name="Oshima K."/>
            <person name="Suzuki T."/>
            <person name="Murakami M."/>
            <person name="Hisamatsu S."/>
            <person name="Kato Y."/>
            <person name="Takizawa T."/>
            <person name="Fukuoka H."/>
            <person name="Yoshimura T."/>
            <person name="Itoh K."/>
            <person name="O'Sullivan D.J."/>
            <person name="McKay L.L."/>
            <person name="Ohno H."/>
            <person name="Kikuchi J."/>
            <person name="Masaoka T."/>
            <person name="Hattori M."/>
        </authorList>
    </citation>
    <scope>NUCLEOTIDE SEQUENCE [LARGE SCALE GENOMIC DNA]</scope>
    <source>
        <strain>NBRC 3956 / LMG 18251</strain>
    </source>
</reference>
<dbReference type="EC" id="6.3.5.-" evidence="1"/>
<dbReference type="EMBL" id="AP008937">
    <property type="protein sequence ID" value="BAG27807.1"/>
    <property type="molecule type" value="Genomic_DNA"/>
</dbReference>
<dbReference type="RefSeq" id="WP_012391578.1">
    <property type="nucleotide sequence ID" value="NC_010610.1"/>
</dbReference>
<dbReference type="SMR" id="B2GDS5"/>
<dbReference type="KEGG" id="lfe:LAF_1471"/>
<dbReference type="eggNOG" id="COG0064">
    <property type="taxonomic scope" value="Bacteria"/>
</dbReference>
<dbReference type="HOGENOM" id="CLU_019240_0_0_9"/>
<dbReference type="Proteomes" id="UP000001697">
    <property type="component" value="Chromosome"/>
</dbReference>
<dbReference type="GO" id="GO:0050566">
    <property type="term" value="F:asparaginyl-tRNA synthase (glutamine-hydrolyzing) activity"/>
    <property type="evidence" value="ECO:0007669"/>
    <property type="project" value="RHEA"/>
</dbReference>
<dbReference type="GO" id="GO:0005524">
    <property type="term" value="F:ATP binding"/>
    <property type="evidence" value="ECO:0007669"/>
    <property type="project" value="UniProtKB-KW"/>
</dbReference>
<dbReference type="GO" id="GO:0050567">
    <property type="term" value="F:glutaminyl-tRNA synthase (glutamine-hydrolyzing) activity"/>
    <property type="evidence" value="ECO:0007669"/>
    <property type="project" value="UniProtKB-UniRule"/>
</dbReference>
<dbReference type="GO" id="GO:0070681">
    <property type="term" value="P:glutaminyl-tRNAGln biosynthesis via transamidation"/>
    <property type="evidence" value="ECO:0007669"/>
    <property type="project" value="TreeGrafter"/>
</dbReference>
<dbReference type="GO" id="GO:0006412">
    <property type="term" value="P:translation"/>
    <property type="evidence" value="ECO:0007669"/>
    <property type="project" value="UniProtKB-UniRule"/>
</dbReference>
<dbReference type="FunFam" id="1.10.10.410:FF:000001">
    <property type="entry name" value="Aspartyl/glutamyl-tRNA(Asn/Gln) amidotransferase subunit B"/>
    <property type="match status" value="1"/>
</dbReference>
<dbReference type="FunFam" id="1.10.150.380:FF:000001">
    <property type="entry name" value="Aspartyl/glutamyl-tRNA(Asn/Gln) amidotransferase subunit B"/>
    <property type="match status" value="1"/>
</dbReference>
<dbReference type="Gene3D" id="1.10.10.410">
    <property type="match status" value="1"/>
</dbReference>
<dbReference type="Gene3D" id="1.10.150.380">
    <property type="entry name" value="GatB domain, N-terminal subdomain"/>
    <property type="match status" value="1"/>
</dbReference>
<dbReference type="HAMAP" id="MF_00121">
    <property type="entry name" value="GatB"/>
    <property type="match status" value="1"/>
</dbReference>
<dbReference type="InterPro" id="IPR017959">
    <property type="entry name" value="Asn/Gln-tRNA_amidoTrfase_suB/E"/>
</dbReference>
<dbReference type="InterPro" id="IPR006075">
    <property type="entry name" value="Asn/Gln-tRNA_Trfase_suB/E_cat"/>
</dbReference>
<dbReference type="InterPro" id="IPR018027">
    <property type="entry name" value="Asn/Gln_amidotransferase"/>
</dbReference>
<dbReference type="InterPro" id="IPR003789">
    <property type="entry name" value="Asn/Gln_tRNA_amidoTrase-B-like"/>
</dbReference>
<dbReference type="InterPro" id="IPR004413">
    <property type="entry name" value="GatB"/>
</dbReference>
<dbReference type="InterPro" id="IPR042114">
    <property type="entry name" value="GatB_C_1"/>
</dbReference>
<dbReference type="InterPro" id="IPR023168">
    <property type="entry name" value="GatB_Yqey_C_2"/>
</dbReference>
<dbReference type="InterPro" id="IPR017958">
    <property type="entry name" value="Gln-tRNA_amidoTrfase_suB_CS"/>
</dbReference>
<dbReference type="InterPro" id="IPR014746">
    <property type="entry name" value="Gln_synth/guanido_kin_cat_dom"/>
</dbReference>
<dbReference type="NCBIfam" id="TIGR00133">
    <property type="entry name" value="gatB"/>
    <property type="match status" value="1"/>
</dbReference>
<dbReference type="NCBIfam" id="NF004011">
    <property type="entry name" value="PRK05477.1-1"/>
    <property type="match status" value="1"/>
</dbReference>
<dbReference type="NCBIfam" id="NF004012">
    <property type="entry name" value="PRK05477.1-2"/>
    <property type="match status" value="1"/>
</dbReference>
<dbReference type="NCBIfam" id="NF004014">
    <property type="entry name" value="PRK05477.1-4"/>
    <property type="match status" value="1"/>
</dbReference>
<dbReference type="PANTHER" id="PTHR11659">
    <property type="entry name" value="GLUTAMYL-TRNA GLN AMIDOTRANSFERASE SUBUNIT B MITOCHONDRIAL AND PROKARYOTIC PET112-RELATED"/>
    <property type="match status" value="1"/>
</dbReference>
<dbReference type="PANTHER" id="PTHR11659:SF0">
    <property type="entry name" value="GLUTAMYL-TRNA(GLN) AMIDOTRANSFERASE SUBUNIT B, MITOCHONDRIAL"/>
    <property type="match status" value="1"/>
</dbReference>
<dbReference type="Pfam" id="PF02934">
    <property type="entry name" value="GatB_N"/>
    <property type="match status" value="1"/>
</dbReference>
<dbReference type="Pfam" id="PF02637">
    <property type="entry name" value="GatB_Yqey"/>
    <property type="match status" value="1"/>
</dbReference>
<dbReference type="SMART" id="SM00845">
    <property type="entry name" value="GatB_Yqey"/>
    <property type="match status" value="1"/>
</dbReference>
<dbReference type="SUPFAM" id="SSF89095">
    <property type="entry name" value="GatB/YqeY motif"/>
    <property type="match status" value="1"/>
</dbReference>
<dbReference type="SUPFAM" id="SSF55931">
    <property type="entry name" value="Glutamine synthetase/guanido kinase"/>
    <property type="match status" value="1"/>
</dbReference>
<dbReference type="PROSITE" id="PS01234">
    <property type="entry name" value="GATB"/>
    <property type="match status" value="1"/>
</dbReference>